<comment type="function">
    <text evidence="1">DNA-dependent RNA polymerase catalyzes the transcription of DNA into RNA using the four ribonucleoside triphosphates as substrates.</text>
</comment>
<comment type="catalytic activity">
    <reaction evidence="1">
        <text>RNA(n) + a ribonucleoside 5'-triphosphate = RNA(n+1) + diphosphate</text>
        <dbReference type="Rhea" id="RHEA:21248"/>
        <dbReference type="Rhea" id="RHEA-COMP:14527"/>
        <dbReference type="Rhea" id="RHEA-COMP:17342"/>
        <dbReference type="ChEBI" id="CHEBI:33019"/>
        <dbReference type="ChEBI" id="CHEBI:61557"/>
        <dbReference type="ChEBI" id="CHEBI:140395"/>
        <dbReference type="EC" id="2.7.7.6"/>
    </reaction>
</comment>
<comment type="cofactor">
    <cofactor evidence="1">
        <name>Mg(2+)</name>
        <dbReference type="ChEBI" id="CHEBI:18420"/>
    </cofactor>
    <text evidence="1">Binds 1 Mg(2+) ion per subunit.</text>
</comment>
<comment type="cofactor">
    <cofactor evidence="1">
        <name>Zn(2+)</name>
        <dbReference type="ChEBI" id="CHEBI:29105"/>
    </cofactor>
    <text evidence="1">Binds 2 Zn(2+) ions per subunit.</text>
</comment>
<comment type="subunit">
    <text evidence="1">The RNAP catalytic core consists of 2 alpha, 1 beta, 1 beta' and 1 omega subunit. When a sigma factor is associated with the core the holoenzyme is formed, which can initiate transcription.</text>
</comment>
<comment type="similarity">
    <text evidence="1">Belongs to the RNA polymerase beta' chain family.</text>
</comment>
<reference key="1">
    <citation type="submission" date="2005-10" db="EMBL/GenBank/DDBJ databases">
        <title>Complete sequence of Pelobacter carbinolicus DSM 2380.</title>
        <authorList>
            <person name="Copeland A."/>
            <person name="Lucas S."/>
            <person name="Lapidus A."/>
            <person name="Barry K."/>
            <person name="Detter J.C."/>
            <person name="Glavina T."/>
            <person name="Hammon N."/>
            <person name="Israni S."/>
            <person name="Pitluck S."/>
            <person name="Chertkov O."/>
            <person name="Schmutz J."/>
            <person name="Larimer F."/>
            <person name="Land M."/>
            <person name="Kyrpides N."/>
            <person name="Ivanova N."/>
            <person name="Richardson P."/>
        </authorList>
    </citation>
    <scope>NUCLEOTIDE SEQUENCE [LARGE SCALE GENOMIC DNA]</scope>
    <source>
        <strain>DSM 2380 / NBRC 103641 / GraBd1</strain>
    </source>
</reference>
<organism>
    <name type="scientific">Syntrophotalea carbinolica (strain DSM 2380 / NBRC 103641 / GraBd1)</name>
    <name type="common">Pelobacter carbinolicus</name>
    <dbReference type="NCBI Taxonomy" id="338963"/>
    <lineage>
        <taxon>Bacteria</taxon>
        <taxon>Pseudomonadati</taxon>
        <taxon>Thermodesulfobacteriota</taxon>
        <taxon>Desulfuromonadia</taxon>
        <taxon>Desulfuromonadales</taxon>
        <taxon>Syntrophotaleaceae</taxon>
        <taxon>Syntrophotalea</taxon>
    </lineage>
</organism>
<keyword id="KW-0240">DNA-directed RNA polymerase</keyword>
<keyword id="KW-0460">Magnesium</keyword>
<keyword id="KW-0479">Metal-binding</keyword>
<keyword id="KW-0548">Nucleotidyltransferase</keyword>
<keyword id="KW-1185">Reference proteome</keyword>
<keyword id="KW-0804">Transcription</keyword>
<keyword id="KW-0808">Transferase</keyword>
<keyword id="KW-0862">Zinc</keyword>
<name>RPOC_SYNC1</name>
<evidence type="ECO:0000255" key="1">
    <source>
        <dbReference type="HAMAP-Rule" id="MF_01322"/>
    </source>
</evidence>
<evidence type="ECO:0000256" key="2">
    <source>
        <dbReference type="SAM" id="MobiDB-lite"/>
    </source>
</evidence>
<sequence length="1396" mass="155017">MEDIFSLFERPKDPLSFNAIRLSLVSPEKIRERSFGEVKKPETINYRTFKPERDGLFCAKIFGPTKDYECNCGKYKRMKHRGIVCEKCGVEVIPSKVRRERLGHIDLACPVAHIWFLKSLPSRIATLLDMTLKEVERVLYFEAYLVLDAGDTPLFRGQLLTEDKYAETMEEYAGQFVATMGAEAIRDFLLSIDIEELSTVLRKEMSEAASEAKRKKVAKRLKVVEAFKFSGNRPEWLILETIPVLPPELRPLVPLDGGRFATSDLNDLYRRVINRNNRLKRLMELRAPEVIIRNEKRMLQEAVDALFDNGRRGRAITGPNKRPLKSLSDMLKGKGGRFRQNLLGKRVDYSGRSVIVVGPELKLHQCGLPKKMALELFKPFIYNKLEERGFCTTIKSAKKMVEKEKSEVWDVLEEVIKEHPVMLNRAPTLHRLGIQAFEPVLIEGKAIQLHPLVCTAFNADFDGDQMAVHLPLSIESQIETRVLMMSTNNILSPAHGKPIIVPSQDMILGLYYMTRERAFARGEGKILSSRDELRMAYDAGEIDLQAKIKVRMSPALGEPETLVETTTGRVLLRDVVPEVIPFDYINVVMAKKHVANLIDVCFRLAGNKETVLLADKLKDTGYRFSTMAGISICLDDMVIPESKDVLMKAAVEEVTEIQKQYTEGLITDGERYNKVIDIWAKCTEDIAQTMLDTLSKDEIVSPEGEAVKVPSFNSIHMMADSGARGSAQQIRQLAGMRGLMAKPSGEIIETPITANFREGLTVLQYFISTHGARKGLADTALKTANSGYLTRRLVDVAQDAIITEQDCDSLDGIVMTALTEGGEVIERLGDRILGRTALEDVLDPVTGEVLVEANQQIDETLVEKIENAGIEKVKIRSVLTCQSQRGICATCYGRDLARGHLVNLGEAVGVIAAQSIGEPGTQLTMRTFHIGGTASRRAEQTSLEARFDGFVKYLNLNSVLDAEGFHVVMNRNAEIAVVDETGRERERYGVVYGARLRINPDAPVQAGSLLAEWDPYTMPILTEIAGTVRFGDILEGVSMEEQVDEVTGLSRKVVIESKGADKRPRITLKDSEGKTAKLPNGAPARYMLPVGAIIVASEDETVSGGAILAKIPRETTKTKDITGGLPRVAELFEARKPKEYAIISEIDGVVSFGKDSKGKRKVHVTPEVGSPKEYLIPKGKHISVHEGDHIKAGEALMDGSSNPHDILRVLGEKELAKYLVDEVQEVYRLQGVKINDKHIEVIVRQMLRRVRIKEPGNTRFLADDQVERWEFECENRKVVGEGGAPAVGEPLMLGITKASLSTESFISAASFQETTKVLTQAAIEGKIDYLRGLKENVIMGRLIPAGTGISKYRSAHLLIEEPEEIEEPVPEDLEDETAGADSAQAASEESVAEGKD</sequence>
<feature type="chain" id="PRO_0000225561" description="DNA-directed RNA polymerase subunit beta'">
    <location>
        <begin position="1"/>
        <end position="1396"/>
    </location>
</feature>
<feature type="region of interest" description="Disordered" evidence="2">
    <location>
        <begin position="1361"/>
        <end position="1396"/>
    </location>
</feature>
<feature type="compositionally biased region" description="Acidic residues" evidence="2">
    <location>
        <begin position="1361"/>
        <end position="1378"/>
    </location>
</feature>
<feature type="compositionally biased region" description="Low complexity" evidence="2">
    <location>
        <begin position="1379"/>
        <end position="1389"/>
    </location>
</feature>
<feature type="binding site" evidence="1">
    <location>
        <position position="70"/>
    </location>
    <ligand>
        <name>Zn(2+)</name>
        <dbReference type="ChEBI" id="CHEBI:29105"/>
        <label>1</label>
    </ligand>
</feature>
<feature type="binding site" evidence="1">
    <location>
        <position position="72"/>
    </location>
    <ligand>
        <name>Zn(2+)</name>
        <dbReference type="ChEBI" id="CHEBI:29105"/>
        <label>1</label>
    </ligand>
</feature>
<feature type="binding site" evidence="1">
    <location>
        <position position="85"/>
    </location>
    <ligand>
        <name>Zn(2+)</name>
        <dbReference type="ChEBI" id="CHEBI:29105"/>
        <label>1</label>
    </ligand>
</feature>
<feature type="binding site" evidence="1">
    <location>
        <position position="88"/>
    </location>
    <ligand>
        <name>Zn(2+)</name>
        <dbReference type="ChEBI" id="CHEBI:29105"/>
        <label>1</label>
    </ligand>
</feature>
<feature type="binding site" evidence="1">
    <location>
        <position position="460"/>
    </location>
    <ligand>
        <name>Mg(2+)</name>
        <dbReference type="ChEBI" id="CHEBI:18420"/>
    </ligand>
</feature>
<feature type="binding site" evidence="1">
    <location>
        <position position="462"/>
    </location>
    <ligand>
        <name>Mg(2+)</name>
        <dbReference type="ChEBI" id="CHEBI:18420"/>
    </ligand>
</feature>
<feature type="binding site" evidence="1">
    <location>
        <position position="464"/>
    </location>
    <ligand>
        <name>Mg(2+)</name>
        <dbReference type="ChEBI" id="CHEBI:18420"/>
    </ligand>
</feature>
<feature type="binding site" evidence="1">
    <location>
        <position position="807"/>
    </location>
    <ligand>
        <name>Zn(2+)</name>
        <dbReference type="ChEBI" id="CHEBI:29105"/>
        <label>2</label>
    </ligand>
</feature>
<feature type="binding site" evidence="1">
    <location>
        <position position="881"/>
    </location>
    <ligand>
        <name>Zn(2+)</name>
        <dbReference type="ChEBI" id="CHEBI:29105"/>
        <label>2</label>
    </ligand>
</feature>
<feature type="binding site" evidence="1">
    <location>
        <position position="888"/>
    </location>
    <ligand>
        <name>Zn(2+)</name>
        <dbReference type="ChEBI" id="CHEBI:29105"/>
        <label>2</label>
    </ligand>
</feature>
<feature type="binding site" evidence="1">
    <location>
        <position position="891"/>
    </location>
    <ligand>
        <name>Zn(2+)</name>
        <dbReference type="ChEBI" id="CHEBI:29105"/>
        <label>2</label>
    </ligand>
</feature>
<accession>Q3A6Q3</accession>
<gene>
    <name evidence="1" type="primary">rpoC</name>
    <name type="ordered locus">Pcar_0695</name>
</gene>
<protein>
    <recommendedName>
        <fullName evidence="1">DNA-directed RNA polymerase subunit beta'</fullName>
        <shortName evidence="1">RNAP subunit beta'</shortName>
        <ecNumber evidence="1">2.7.7.6</ecNumber>
    </recommendedName>
    <alternativeName>
        <fullName evidence="1">RNA polymerase subunit beta'</fullName>
    </alternativeName>
    <alternativeName>
        <fullName evidence="1">Transcriptase subunit beta'</fullName>
    </alternativeName>
</protein>
<proteinExistence type="inferred from homology"/>
<dbReference type="EC" id="2.7.7.6" evidence="1"/>
<dbReference type="EMBL" id="CP000142">
    <property type="protein sequence ID" value="ABA87954.1"/>
    <property type="molecule type" value="Genomic_DNA"/>
</dbReference>
<dbReference type="RefSeq" id="WP_011340397.1">
    <property type="nucleotide sequence ID" value="NC_007498.2"/>
</dbReference>
<dbReference type="SMR" id="Q3A6Q3"/>
<dbReference type="STRING" id="338963.Pcar_0695"/>
<dbReference type="KEGG" id="pca:Pcar_0695"/>
<dbReference type="eggNOG" id="COG0086">
    <property type="taxonomic scope" value="Bacteria"/>
</dbReference>
<dbReference type="HOGENOM" id="CLU_000524_3_1_7"/>
<dbReference type="OrthoDB" id="9815296at2"/>
<dbReference type="Proteomes" id="UP000002534">
    <property type="component" value="Chromosome"/>
</dbReference>
<dbReference type="GO" id="GO:0000428">
    <property type="term" value="C:DNA-directed RNA polymerase complex"/>
    <property type="evidence" value="ECO:0007669"/>
    <property type="project" value="UniProtKB-KW"/>
</dbReference>
<dbReference type="GO" id="GO:0003677">
    <property type="term" value="F:DNA binding"/>
    <property type="evidence" value="ECO:0007669"/>
    <property type="project" value="UniProtKB-UniRule"/>
</dbReference>
<dbReference type="GO" id="GO:0003899">
    <property type="term" value="F:DNA-directed RNA polymerase activity"/>
    <property type="evidence" value="ECO:0007669"/>
    <property type="project" value="UniProtKB-UniRule"/>
</dbReference>
<dbReference type="GO" id="GO:0000287">
    <property type="term" value="F:magnesium ion binding"/>
    <property type="evidence" value="ECO:0007669"/>
    <property type="project" value="UniProtKB-UniRule"/>
</dbReference>
<dbReference type="GO" id="GO:0008270">
    <property type="term" value="F:zinc ion binding"/>
    <property type="evidence" value="ECO:0007669"/>
    <property type="project" value="UniProtKB-UniRule"/>
</dbReference>
<dbReference type="GO" id="GO:0006351">
    <property type="term" value="P:DNA-templated transcription"/>
    <property type="evidence" value="ECO:0007669"/>
    <property type="project" value="UniProtKB-UniRule"/>
</dbReference>
<dbReference type="CDD" id="cd02655">
    <property type="entry name" value="RNAP_beta'_C"/>
    <property type="match status" value="1"/>
</dbReference>
<dbReference type="CDD" id="cd01609">
    <property type="entry name" value="RNAP_beta'_N"/>
    <property type="match status" value="1"/>
</dbReference>
<dbReference type="FunFam" id="1.10.132.30:FF:000003">
    <property type="entry name" value="DNA-directed RNA polymerase subunit beta"/>
    <property type="match status" value="1"/>
</dbReference>
<dbReference type="FunFam" id="1.10.150.390:FF:000002">
    <property type="entry name" value="DNA-directed RNA polymerase subunit beta"/>
    <property type="match status" value="1"/>
</dbReference>
<dbReference type="FunFam" id="1.10.40.90:FF:000001">
    <property type="entry name" value="DNA-directed RNA polymerase subunit beta"/>
    <property type="match status" value="1"/>
</dbReference>
<dbReference type="Gene3D" id="1.10.132.30">
    <property type="match status" value="1"/>
</dbReference>
<dbReference type="Gene3D" id="1.10.150.390">
    <property type="match status" value="1"/>
</dbReference>
<dbReference type="Gene3D" id="1.10.1790.20">
    <property type="match status" value="1"/>
</dbReference>
<dbReference type="Gene3D" id="1.10.40.90">
    <property type="match status" value="1"/>
</dbReference>
<dbReference type="Gene3D" id="2.40.40.20">
    <property type="match status" value="1"/>
</dbReference>
<dbReference type="Gene3D" id="2.40.50.100">
    <property type="match status" value="3"/>
</dbReference>
<dbReference type="Gene3D" id="4.10.860.120">
    <property type="entry name" value="RNA polymerase II, clamp domain"/>
    <property type="match status" value="1"/>
</dbReference>
<dbReference type="Gene3D" id="1.10.274.100">
    <property type="entry name" value="RNA polymerase Rpb1, domain 3"/>
    <property type="match status" value="2"/>
</dbReference>
<dbReference type="HAMAP" id="MF_01322">
    <property type="entry name" value="RNApol_bact_RpoC"/>
    <property type="match status" value="1"/>
</dbReference>
<dbReference type="InterPro" id="IPR045867">
    <property type="entry name" value="DNA-dir_RpoC_beta_prime"/>
</dbReference>
<dbReference type="InterPro" id="IPR012754">
    <property type="entry name" value="DNA-dir_RpoC_beta_prime_bact"/>
</dbReference>
<dbReference type="InterPro" id="IPR000722">
    <property type="entry name" value="RNA_pol_asu"/>
</dbReference>
<dbReference type="InterPro" id="IPR006592">
    <property type="entry name" value="RNA_pol_N"/>
</dbReference>
<dbReference type="InterPro" id="IPR007080">
    <property type="entry name" value="RNA_pol_Rpb1_1"/>
</dbReference>
<dbReference type="InterPro" id="IPR007066">
    <property type="entry name" value="RNA_pol_Rpb1_3"/>
</dbReference>
<dbReference type="InterPro" id="IPR042102">
    <property type="entry name" value="RNA_pol_Rpb1_3_sf"/>
</dbReference>
<dbReference type="InterPro" id="IPR007083">
    <property type="entry name" value="RNA_pol_Rpb1_4"/>
</dbReference>
<dbReference type="InterPro" id="IPR007081">
    <property type="entry name" value="RNA_pol_Rpb1_5"/>
</dbReference>
<dbReference type="InterPro" id="IPR044893">
    <property type="entry name" value="RNA_pol_Rpb1_clamp_domain"/>
</dbReference>
<dbReference type="InterPro" id="IPR038120">
    <property type="entry name" value="Rpb1_funnel_sf"/>
</dbReference>
<dbReference type="NCBIfam" id="TIGR02386">
    <property type="entry name" value="rpoC_TIGR"/>
    <property type="match status" value="1"/>
</dbReference>
<dbReference type="PANTHER" id="PTHR19376">
    <property type="entry name" value="DNA-DIRECTED RNA POLYMERASE"/>
    <property type="match status" value="1"/>
</dbReference>
<dbReference type="PANTHER" id="PTHR19376:SF54">
    <property type="entry name" value="DNA-DIRECTED RNA POLYMERASE SUBUNIT BETA"/>
    <property type="match status" value="1"/>
</dbReference>
<dbReference type="Pfam" id="PF04997">
    <property type="entry name" value="RNA_pol_Rpb1_1"/>
    <property type="match status" value="1"/>
</dbReference>
<dbReference type="Pfam" id="PF00623">
    <property type="entry name" value="RNA_pol_Rpb1_2"/>
    <property type="match status" value="1"/>
</dbReference>
<dbReference type="Pfam" id="PF04983">
    <property type="entry name" value="RNA_pol_Rpb1_3"/>
    <property type="match status" value="1"/>
</dbReference>
<dbReference type="Pfam" id="PF05000">
    <property type="entry name" value="RNA_pol_Rpb1_4"/>
    <property type="match status" value="1"/>
</dbReference>
<dbReference type="Pfam" id="PF04998">
    <property type="entry name" value="RNA_pol_Rpb1_5"/>
    <property type="match status" value="1"/>
</dbReference>
<dbReference type="SMART" id="SM00663">
    <property type="entry name" value="RPOLA_N"/>
    <property type="match status" value="1"/>
</dbReference>
<dbReference type="SUPFAM" id="SSF64484">
    <property type="entry name" value="beta and beta-prime subunits of DNA dependent RNA-polymerase"/>
    <property type="match status" value="1"/>
</dbReference>